<name>UNG_STRS2</name>
<keyword id="KW-0963">Cytoplasm</keyword>
<keyword id="KW-0227">DNA damage</keyword>
<keyword id="KW-0234">DNA repair</keyword>
<keyword id="KW-0378">Hydrolase</keyword>
<evidence type="ECO:0000255" key="1">
    <source>
        <dbReference type="HAMAP-Rule" id="MF_00148"/>
    </source>
</evidence>
<gene>
    <name evidence="1" type="primary">ung</name>
    <name type="ordered locus">SSU98_1016</name>
</gene>
<proteinExistence type="inferred from homology"/>
<protein>
    <recommendedName>
        <fullName evidence="1">Uracil-DNA glycosylase</fullName>
        <shortName evidence="1">UDG</shortName>
        <ecNumber evidence="1">3.2.2.27</ecNumber>
    </recommendedName>
</protein>
<accession>A4W1D5</accession>
<dbReference type="EC" id="3.2.2.27" evidence="1"/>
<dbReference type="EMBL" id="CP000408">
    <property type="protein sequence ID" value="ABP92174.1"/>
    <property type="molecule type" value="Genomic_DNA"/>
</dbReference>
<dbReference type="SMR" id="A4W1D5"/>
<dbReference type="KEGG" id="ssv:SSU98_1016"/>
<dbReference type="HOGENOM" id="CLU_032162_3_1_9"/>
<dbReference type="GO" id="GO:0005737">
    <property type="term" value="C:cytoplasm"/>
    <property type="evidence" value="ECO:0007669"/>
    <property type="project" value="UniProtKB-SubCell"/>
</dbReference>
<dbReference type="GO" id="GO:0004844">
    <property type="term" value="F:uracil DNA N-glycosylase activity"/>
    <property type="evidence" value="ECO:0007669"/>
    <property type="project" value="UniProtKB-UniRule"/>
</dbReference>
<dbReference type="GO" id="GO:0097510">
    <property type="term" value="P:base-excision repair, AP site formation via deaminated base removal"/>
    <property type="evidence" value="ECO:0007669"/>
    <property type="project" value="TreeGrafter"/>
</dbReference>
<dbReference type="CDD" id="cd10027">
    <property type="entry name" value="UDG-F1-like"/>
    <property type="match status" value="1"/>
</dbReference>
<dbReference type="FunFam" id="3.40.470.10:FF:000008">
    <property type="entry name" value="Uracil-DNA glycosylase"/>
    <property type="match status" value="1"/>
</dbReference>
<dbReference type="Gene3D" id="3.40.470.10">
    <property type="entry name" value="Uracil-DNA glycosylase-like domain"/>
    <property type="match status" value="1"/>
</dbReference>
<dbReference type="HAMAP" id="MF_00148">
    <property type="entry name" value="UDG"/>
    <property type="match status" value="1"/>
</dbReference>
<dbReference type="InterPro" id="IPR002043">
    <property type="entry name" value="UDG_fam1"/>
</dbReference>
<dbReference type="InterPro" id="IPR018085">
    <property type="entry name" value="Ura-DNA_Glyclase_AS"/>
</dbReference>
<dbReference type="InterPro" id="IPR005122">
    <property type="entry name" value="Uracil-DNA_glycosylase-like"/>
</dbReference>
<dbReference type="InterPro" id="IPR036895">
    <property type="entry name" value="Uracil-DNA_glycosylase-like_sf"/>
</dbReference>
<dbReference type="NCBIfam" id="NF003588">
    <property type="entry name" value="PRK05254.1-1"/>
    <property type="match status" value="1"/>
</dbReference>
<dbReference type="NCBIfam" id="NF003589">
    <property type="entry name" value="PRK05254.1-2"/>
    <property type="match status" value="1"/>
</dbReference>
<dbReference type="NCBIfam" id="NF003591">
    <property type="entry name" value="PRK05254.1-4"/>
    <property type="match status" value="1"/>
</dbReference>
<dbReference type="NCBIfam" id="NF003592">
    <property type="entry name" value="PRK05254.1-5"/>
    <property type="match status" value="1"/>
</dbReference>
<dbReference type="NCBIfam" id="TIGR00628">
    <property type="entry name" value="ung"/>
    <property type="match status" value="1"/>
</dbReference>
<dbReference type="PANTHER" id="PTHR11264">
    <property type="entry name" value="URACIL-DNA GLYCOSYLASE"/>
    <property type="match status" value="1"/>
</dbReference>
<dbReference type="PANTHER" id="PTHR11264:SF0">
    <property type="entry name" value="URACIL-DNA GLYCOSYLASE"/>
    <property type="match status" value="1"/>
</dbReference>
<dbReference type="Pfam" id="PF03167">
    <property type="entry name" value="UDG"/>
    <property type="match status" value="1"/>
</dbReference>
<dbReference type="SMART" id="SM00986">
    <property type="entry name" value="UDG"/>
    <property type="match status" value="1"/>
</dbReference>
<dbReference type="SMART" id="SM00987">
    <property type="entry name" value="UreE_C"/>
    <property type="match status" value="1"/>
</dbReference>
<dbReference type="SUPFAM" id="SSF52141">
    <property type="entry name" value="Uracil-DNA glycosylase-like"/>
    <property type="match status" value="1"/>
</dbReference>
<dbReference type="PROSITE" id="PS00130">
    <property type="entry name" value="U_DNA_GLYCOSYLASE"/>
    <property type="match status" value="1"/>
</dbReference>
<feature type="chain" id="PRO_1000009956" description="Uracil-DNA glycosylase">
    <location>
        <begin position="1"/>
        <end position="217"/>
    </location>
</feature>
<feature type="active site" description="Proton acceptor" evidence="1">
    <location>
        <position position="62"/>
    </location>
</feature>
<comment type="function">
    <text evidence="1">Excises uracil residues from the DNA which can arise as a result of misincorporation of dUMP residues by DNA polymerase or due to deamination of cytosine.</text>
</comment>
<comment type="catalytic activity">
    <reaction evidence="1">
        <text>Hydrolyzes single-stranded DNA or mismatched double-stranded DNA and polynucleotides, releasing free uracil.</text>
        <dbReference type="EC" id="3.2.2.27"/>
    </reaction>
</comment>
<comment type="subcellular location">
    <subcellularLocation>
        <location evidence="1">Cytoplasm</location>
    </subcellularLocation>
</comment>
<comment type="similarity">
    <text evidence="1">Belongs to the uracil-DNA glycosylase (UDG) superfamily. UNG family.</text>
</comment>
<organism>
    <name type="scientific">Streptococcus suis (strain 98HAH33)</name>
    <dbReference type="NCBI Taxonomy" id="391296"/>
    <lineage>
        <taxon>Bacteria</taxon>
        <taxon>Bacillati</taxon>
        <taxon>Bacillota</taxon>
        <taxon>Bacilli</taxon>
        <taxon>Lactobacillales</taxon>
        <taxon>Streptococcaceae</taxon>
        <taxon>Streptococcus</taxon>
    </lineage>
</organism>
<sequence length="217" mass="23874">MEHSAWHELIKAQLPEHYFGKINQFLDHVYAGGTIYPPREKVFAAIQTTDLEEVKVVILGQDPYHGPGQAQGLSFSVPNSVPAPPSLQNILKELTDDIGVKQDHDLTAWAEQGVLLLNACLTVPAGQANGHAGQIWEPFTDAVIKVVNSLDQPVVYILWGAYARKKKALITNPKHLVIESAHPSPLSAYRGFFGSKPFSQANAYLTSQGRTGIDWLR</sequence>
<reference key="1">
    <citation type="journal article" date="2007" name="PLoS ONE">
        <title>A glimpse of streptococcal toxic shock syndrome from comparative genomics of S. suis 2 Chinese isolates.</title>
        <authorList>
            <person name="Chen C."/>
            <person name="Tang J."/>
            <person name="Dong W."/>
            <person name="Wang C."/>
            <person name="Feng Y."/>
            <person name="Wang J."/>
            <person name="Zheng F."/>
            <person name="Pan X."/>
            <person name="Liu D."/>
            <person name="Li M."/>
            <person name="Song Y."/>
            <person name="Zhu X."/>
            <person name="Sun H."/>
            <person name="Feng T."/>
            <person name="Guo Z."/>
            <person name="Ju A."/>
            <person name="Ge J."/>
            <person name="Dong Y."/>
            <person name="Sun W."/>
            <person name="Jiang Y."/>
            <person name="Wang J."/>
            <person name="Yan J."/>
            <person name="Yang H."/>
            <person name="Wang X."/>
            <person name="Gao G.F."/>
            <person name="Yang R."/>
            <person name="Wang J."/>
            <person name="Yu J."/>
        </authorList>
    </citation>
    <scope>NUCLEOTIDE SEQUENCE [LARGE SCALE GENOMIC DNA]</scope>
    <source>
        <strain>98HAH33</strain>
    </source>
</reference>